<sequence length="410" mass="43979">MNNRYPVMKKGLIVLVVIAVAAGGYYWWKHPAQPSSDGDLSGQSAHGKRGNGAHKPLAPVQAASAVTESVPQYLNGLGTVTAANTVTVRSRVDGNLMSIHFTEGQQVKAGQLLAEIDPRPYQVALMQAQGQLARDQATLANARRDLARYQKLAKTSLVSQQDLDTQNALVSETLGTIKADEGSVASAQLNLTYSRITSPIDGRVGLKQVDIGNYITSGDTNGLVVITQTHPVDVVFSVAENNISQIMQAQKSGEPLLVEAWDRSNQHLITRGKLLSLDNQIDATTGTIKIKARFDNQDDLLFPNQFVNARLKVNTLQDAVVIPAAALQMGNEGHFVWVINNEDKVSKKSVTAGLQDSQKVVISAGLNAGDRVVTDGLDRLTEGAKVEVVAAQSRATKETRASLPSKGESE</sequence>
<accession>F2EYD8</accession>
<evidence type="ECO:0000255" key="1">
    <source>
        <dbReference type="HAMAP-Rule" id="MF_01422"/>
    </source>
</evidence>
<evidence type="ECO:0000256" key="2">
    <source>
        <dbReference type="SAM" id="MobiDB-lite"/>
    </source>
</evidence>
<feature type="signal peptide" evidence="1">
    <location>
        <begin position="1"/>
        <end position="21"/>
    </location>
</feature>
<feature type="chain" id="PRO_0000414047" description="Multidrug resistance protein MdtA">
    <location>
        <begin position="22"/>
        <end position="410"/>
    </location>
</feature>
<feature type="region of interest" description="Disordered" evidence="2">
    <location>
        <begin position="36"/>
        <end position="56"/>
    </location>
</feature>
<gene>
    <name evidence="1" type="primary">mdtA</name>
    <name type="ordered locus">PAJ_1808</name>
</gene>
<comment type="subunit">
    <text evidence="1">Part of a tripartite efflux system composed of MdtA, MdtB and MdtC.</text>
</comment>
<comment type="subcellular location">
    <subcellularLocation>
        <location evidence="1">Cell inner membrane</location>
        <topology evidence="1">Peripheral membrane protein</topology>
    </subcellularLocation>
</comment>
<comment type="similarity">
    <text evidence="1">Belongs to the membrane fusion protein (MFP) (TC 8.A.1) family.</text>
</comment>
<keyword id="KW-0997">Cell inner membrane</keyword>
<keyword id="KW-1003">Cell membrane</keyword>
<keyword id="KW-0472">Membrane</keyword>
<keyword id="KW-0732">Signal</keyword>
<keyword id="KW-0813">Transport</keyword>
<proteinExistence type="inferred from homology"/>
<organism>
    <name type="scientific">Pantoea ananatis (strain AJ13355)</name>
    <dbReference type="NCBI Taxonomy" id="932677"/>
    <lineage>
        <taxon>Bacteria</taxon>
        <taxon>Pseudomonadati</taxon>
        <taxon>Pseudomonadota</taxon>
        <taxon>Gammaproteobacteria</taxon>
        <taxon>Enterobacterales</taxon>
        <taxon>Erwiniaceae</taxon>
        <taxon>Pantoea</taxon>
    </lineage>
</organism>
<name>MDTA_PANAA</name>
<reference key="1">
    <citation type="journal article" date="2012" name="Appl. Microbiol. Biotechnol.">
        <title>The complete genome sequence of Pantoea ananatis AJ13355, an organism with great biotechnological potential.</title>
        <authorList>
            <person name="Hara Y."/>
            <person name="Kadotani N."/>
            <person name="Izui H."/>
            <person name="Katashkina J.I."/>
            <person name="Kuvaeva T.M."/>
            <person name="Andreeva I.G."/>
            <person name="Golubeva L.I."/>
            <person name="Malko D.B."/>
            <person name="Makeev V.J."/>
            <person name="Mashko S.V."/>
            <person name="Kozlov Y.I."/>
        </authorList>
    </citation>
    <scope>NUCLEOTIDE SEQUENCE [LARGE SCALE GENOMIC DNA]</scope>
    <source>
        <strain>AJ13355</strain>
    </source>
</reference>
<protein>
    <recommendedName>
        <fullName evidence="1">Multidrug resistance protein MdtA</fullName>
    </recommendedName>
    <alternativeName>
        <fullName evidence="1">Multidrug transporter MdtA</fullName>
    </alternativeName>
</protein>
<dbReference type="EMBL" id="AP012032">
    <property type="protein sequence ID" value="BAK11888.1"/>
    <property type="molecule type" value="Genomic_DNA"/>
</dbReference>
<dbReference type="RefSeq" id="WP_013026394.1">
    <property type="nucleotide sequence ID" value="NC_017531.2"/>
</dbReference>
<dbReference type="SMR" id="F2EYD8"/>
<dbReference type="KEGG" id="paj:PAJ_1808"/>
<dbReference type="PATRIC" id="fig|932677.3.peg.2112"/>
<dbReference type="eggNOG" id="COG0845">
    <property type="taxonomic scope" value="Bacteria"/>
</dbReference>
<dbReference type="HOGENOM" id="CLU_018816_2_0_6"/>
<dbReference type="OrthoDB" id="9783047at2"/>
<dbReference type="Proteomes" id="UP000006690">
    <property type="component" value="Chromosome"/>
</dbReference>
<dbReference type="GO" id="GO:1990281">
    <property type="term" value="C:efflux pump complex"/>
    <property type="evidence" value="ECO:0007669"/>
    <property type="project" value="TreeGrafter"/>
</dbReference>
<dbReference type="GO" id="GO:0005886">
    <property type="term" value="C:plasma membrane"/>
    <property type="evidence" value="ECO:0007669"/>
    <property type="project" value="UniProtKB-SubCell"/>
</dbReference>
<dbReference type="GO" id="GO:0015562">
    <property type="term" value="F:efflux transmembrane transporter activity"/>
    <property type="evidence" value="ECO:0007669"/>
    <property type="project" value="TreeGrafter"/>
</dbReference>
<dbReference type="FunFam" id="2.40.420.20:FF:000001">
    <property type="entry name" value="Efflux RND transporter periplasmic adaptor subunit"/>
    <property type="match status" value="1"/>
</dbReference>
<dbReference type="FunFam" id="1.10.287.470:FF:000005">
    <property type="entry name" value="Multidrug resistance protein MdtA"/>
    <property type="match status" value="1"/>
</dbReference>
<dbReference type="FunFam" id="2.40.30.170:FF:000006">
    <property type="entry name" value="Multidrug resistance protein MdtA"/>
    <property type="match status" value="1"/>
</dbReference>
<dbReference type="Gene3D" id="2.40.30.170">
    <property type="match status" value="1"/>
</dbReference>
<dbReference type="Gene3D" id="2.40.420.20">
    <property type="match status" value="1"/>
</dbReference>
<dbReference type="Gene3D" id="2.40.50.100">
    <property type="match status" value="1"/>
</dbReference>
<dbReference type="Gene3D" id="1.10.287.470">
    <property type="entry name" value="Helix hairpin bin"/>
    <property type="match status" value="1"/>
</dbReference>
<dbReference type="HAMAP" id="MF_01422">
    <property type="entry name" value="MdtA"/>
    <property type="match status" value="1"/>
</dbReference>
<dbReference type="InterPro" id="IPR032317">
    <property type="entry name" value="CusB_D23"/>
</dbReference>
<dbReference type="InterPro" id="IPR022824">
    <property type="entry name" value="Multidrug-R_MdtA"/>
</dbReference>
<dbReference type="InterPro" id="IPR006143">
    <property type="entry name" value="RND_pump_MFP"/>
</dbReference>
<dbReference type="NCBIfam" id="NF008589">
    <property type="entry name" value="PRK11556.1"/>
    <property type="match status" value="1"/>
</dbReference>
<dbReference type="NCBIfam" id="TIGR01730">
    <property type="entry name" value="RND_mfp"/>
    <property type="match status" value="1"/>
</dbReference>
<dbReference type="PANTHER" id="PTHR30469">
    <property type="entry name" value="MULTIDRUG RESISTANCE PROTEIN MDTA"/>
    <property type="match status" value="1"/>
</dbReference>
<dbReference type="PANTHER" id="PTHR30469:SF12">
    <property type="entry name" value="MULTIDRUG RESISTANCE PROTEIN MDTA"/>
    <property type="match status" value="1"/>
</dbReference>
<dbReference type="Pfam" id="PF16576">
    <property type="entry name" value="HlyD_D23"/>
    <property type="match status" value="1"/>
</dbReference>
<dbReference type="SUPFAM" id="SSF111369">
    <property type="entry name" value="HlyD-like secretion proteins"/>
    <property type="match status" value="1"/>
</dbReference>